<organism>
    <name type="scientific">Sorghum bicolor</name>
    <name type="common">Sorghum</name>
    <name type="synonym">Sorghum vulgare</name>
    <dbReference type="NCBI Taxonomy" id="4558"/>
    <lineage>
        <taxon>Eukaryota</taxon>
        <taxon>Viridiplantae</taxon>
        <taxon>Streptophyta</taxon>
        <taxon>Embryophyta</taxon>
        <taxon>Tracheophyta</taxon>
        <taxon>Spermatophyta</taxon>
        <taxon>Magnoliopsida</taxon>
        <taxon>Liliopsida</taxon>
        <taxon>Poales</taxon>
        <taxon>Poaceae</taxon>
        <taxon>PACMAD clade</taxon>
        <taxon>Panicoideae</taxon>
        <taxon>Andropogonodae</taxon>
        <taxon>Andropogoneae</taxon>
        <taxon>Sorghinae</taxon>
        <taxon>Sorghum</taxon>
    </lineage>
</organism>
<feature type="chain" id="PRO_0000216056" description="Chalcone synthase 2">
    <location>
        <begin position="1"/>
        <end position="401"/>
    </location>
</feature>
<feature type="active site" evidence="1">
    <location>
        <position position="168"/>
    </location>
</feature>
<keyword id="KW-0012">Acyltransferase</keyword>
<keyword id="KW-0284">Flavonoid biosynthesis</keyword>
<keyword id="KW-0808">Transferase</keyword>
<comment type="function">
    <text>The primary product of this enzyme is 4,2',4',6'-tetrahydroxychalcone (also termed naringenin-chalcone or chalcone) which can under specific conditions spontaneously isomerize into naringenin.</text>
</comment>
<comment type="catalytic activity">
    <reaction evidence="1">
        <text>(E)-4-coumaroyl-CoA + 3 malonyl-CoA + 3 H(+) = 2',4,4',6'-tetrahydroxychalcone + 3 CO2 + 4 CoA</text>
        <dbReference type="Rhea" id="RHEA:11128"/>
        <dbReference type="ChEBI" id="CHEBI:15378"/>
        <dbReference type="ChEBI" id="CHEBI:15413"/>
        <dbReference type="ChEBI" id="CHEBI:16526"/>
        <dbReference type="ChEBI" id="CHEBI:57287"/>
        <dbReference type="ChEBI" id="CHEBI:57384"/>
        <dbReference type="ChEBI" id="CHEBI:85008"/>
        <dbReference type="EC" id="2.3.1.74"/>
    </reaction>
</comment>
<comment type="pathway">
    <text>Secondary metabolite biosynthesis; flavonoid biosynthesis.</text>
</comment>
<comment type="similarity">
    <text evidence="2">Belongs to the thiolase-like superfamily. Chalcone/stilbene synthases family.</text>
</comment>
<name>CHS2_SORBI</name>
<sequence length="401" mass="43718">MAGATVTVEEVRKAQRATGPATVLAIGTATPANCVHQADYPDYYFRITKSEHMTELKEKFKRMCDKSQIRKRYMHLTEEYLAENPNMCAYMAPSLDARQDIVVVEVPKLGKAAAQKAIKEWGQPKSKITHLVFCTTSGVDMPGADYQLTKMLGLRPSVNRLMMYQQGCFAGGTVLRVAKDLAENNRGARVLVVCSEITAVTFRGPSESHLDSMVGQALFGDGAAAVIVGADPDERVERPLFQLVSASQTILPDSEGAIDGHLREVGLTFHLLKDVPGLISKNIERSLEEAFKPLGITDYNSIFWVAHPGGPAILDQVEAKVGLEKERMRATRHVLSEYGNMSSACVLFILDEMRKRSAEDGRATTGEGFEWGVLFGFGPGLTVETVVLHSVPITTGAAITA</sequence>
<reference key="1">
    <citation type="submission" date="1999-05" db="EMBL/GenBank/DDBJ databases">
        <title>Molecular cloning of chalcone synthase genes from sorghum.</title>
        <authorList>
            <person name="Lo S.-C.C."/>
            <person name="Nicholson R.L."/>
        </authorList>
    </citation>
    <scope>NUCLEOTIDE SEQUENCE [GENOMIC DNA]</scope>
</reference>
<protein>
    <recommendedName>
        <fullName>Chalcone synthase 2</fullName>
        <ecNumber>2.3.1.74</ecNumber>
    </recommendedName>
    <alternativeName>
        <fullName>Naringenin-chalcone synthase 2</fullName>
    </alternativeName>
</protein>
<gene>
    <name type="primary">CHS2</name>
</gene>
<accession>Q9SBL7</accession>
<evidence type="ECO:0000255" key="1">
    <source>
        <dbReference type="PROSITE-ProRule" id="PRU10023"/>
    </source>
</evidence>
<evidence type="ECO:0000305" key="2"/>
<dbReference type="EC" id="2.3.1.74"/>
<dbReference type="EMBL" id="AF152549">
    <property type="protein sequence ID" value="AAD41874.1"/>
    <property type="molecule type" value="Genomic_DNA"/>
</dbReference>
<dbReference type="SMR" id="Q9SBL7"/>
<dbReference type="eggNOG" id="ENOG502QRSY">
    <property type="taxonomic scope" value="Eukaryota"/>
</dbReference>
<dbReference type="UniPathway" id="UPA00154"/>
<dbReference type="GO" id="GO:0016210">
    <property type="term" value="F:naringenin-chalcone synthase activity"/>
    <property type="evidence" value="ECO:0007669"/>
    <property type="project" value="UniProtKB-EC"/>
</dbReference>
<dbReference type="GO" id="GO:0009813">
    <property type="term" value="P:flavonoid biosynthetic process"/>
    <property type="evidence" value="ECO:0007669"/>
    <property type="project" value="UniProtKB-UniPathway"/>
</dbReference>
<dbReference type="CDD" id="cd00831">
    <property type="entry name" value="CHS_like"/>
    <property type="match status" value="1"/>
</dbReference>
<dbReference type="FunFam" id="3.40.47.10:FF:000014">
    <property type="entry name" value="Chalcone synthase 1"/>
    <property type="match status" value="1"/>
</dbReference>
<dbReference type="FunFam" id="3.40.47.10:FF:000025">
    <property type="entry name" value="Chalcone synthase 2"/>
    <property type="match status" value="1"/>
</dbReference>
<dbReference type="Gene3D" id="3.40.47.10">
    <property type="match status" value="2"/>
</dbReference>
<dbReference type="InterPro" id="IPR012328">
    <property type="entry name" value="Chalcone/stilbene_synt_C"/>
</dbReference>
<dbReference type="InterPro" id="IPR001099">
    <property type="entry name" value="Chalcone/stilbene_synt_N"/>
</dbReference>
<dbReference type="InterPro" id="IPR018088">
    <property type="entry name" value="Chalcone/stilbene_synthase_AS"/>
</dbReference>
<dbReference type="InterPro" id="IPR011141">
    <property type="entry name" value="Polyketide_synthase_type-III"/>
</dbReference>
<dbReference type="InterPro" id="IPR016039">
    <property type="entry name" value="Thiolase-like"/>
</dbReference>
<dbReference type="PANTHER" id="PTHR11877:SF14">
    <property type="entry name" value="CHALCONE SYNTHASE"/>
    <property type="match status" value="1"/>
</dbReference>
<dbReference type="PANTHER" id="PTHR11877">
    <property type="entry name" value="HYDROXYMETHYLGLUTARYL-COA SYNTHASE"/>
    <property type="match status" value="1"/>
</dbReference>
<dbReference type="Pfam" id="PF02797">
    <property type="entry name" value="Chal_sti_synt_C"/>
    <property type="match status" value="1"/>
</dbReference>
<dbReference type="Pfam" id="PF00195">
    <property type="entry name" value="Chal_sti_synt_N"/>
    <property type="match status" value="1"/>
</dbReference>
<dbReference type="PIRSF" id="PIRSF000451">
    <property type="entry name" value="PKS_III"/>
    <property type="match status" value="1"/>
</dbReference>
<dbReference type="SUPFAM" id="SSF53901">
    <property type="entry name" value="Thiolase-like"/>
    <property type="match status" value="2"/>
</dbReference>
<dbReference type="PROSITE" id="PS00441">
    <property type="entry name" value="CHALCONE_SYNTH"/>
    <property type="match status" value="1"/>
</dbReference>
<proteinExistence type="inferred from homology"/>